<name>MNMA_RUBXD</name>
<proteinExistence type="inferred from homology"/>
<sequence>MPERYGPRVIEHLVNPRNAGEVGGPSGVGEAGNAACGDQVRFTLRVGGDLRLQEVRYRAYGCAACIAAGSALAELAEGRSITGAAQISRGDIQEALGGPLPPGKEHGATLALDALHRAFEDYWSRQGDALLGGEGLGDGSGGRRGVVAAMSGGVDSAVTALLLKERGYEVVAVTFRLHDGEPGSRSCCSPDTVLFARETAHGLGIPHFTLNLRELFDRRVMRDFVGSYAAGRTPNPCVACNAHVKFHAAAFLADRLGLRHVATGHYARVGEGPCLERPEDGRKDQTYVLWPVPPRLLGRTIFPLGDYRKSEVRRIAEERGLAVARTPESQDICFIPDGDYRSFVRRRVRSEPGEIVDRQGRVLGRHAGVVDFTVGQRRGLGISAPTPLYVTEVRPRSRQVVVGSRRELEVRRMLVRGANWFLDPREAALVQVRYNGEPVPCELEEGAGGWEVALLEPVFGVAPGQSAVFYTRDGAKVVGGGIIARRDA</sequence>
<keyword id="KW-0067">ATP-binding</keyword>
<keyword id="KW-0963">Cytoplasm</keyword>
<keyword id="KW-1015">Disulfide bond</keyword>
<keyword id="KW-0511">Multifunctional enzyme</keyword>
<keyword id="KW-0547">Nucleotide-binding</keyword>
<keyword id="KW-1185">Reference proteome</keyword>
<keyword id="KW-0694">RNA-binding</keyword>
<keyword id="KW-0808">Transferase</keyword>
<keyword id="KW-0819">tRNA processing</keyword>
<keyword id="KW-0820">tRNA-binding</keyword>
<dbReference type="EC" id="2.8.1.13"/>
<dbReference type="EMBL" id="CP000386">
    <property type="protein sequence ID" value="ABG04317.1"/>
    <property type="molecule type" value="Genomic_DNA"/>
</dbReference>
<dbReference type="RefSeq" id="WP_011564334.1">
    <property type="nucleotide sequence ID" value="NC_008148.1"/>
</dbReference>
<dbReference type="SMR" id="Q1AWB1"/>
<dbReference type="STRING" id="266117.Rxyl_1354"/>
<dbReference type="KEGG" id="rxy:Rxyl_1354"/>
<dbReference type="eggNOG" id="COG0482">
    <property type="taxonomic scope" value="Bacteria"/>
</dbReference>
<dbReference type="eggNOG" id="COG0822">
    <property type="taxonomic scope" value="Bacteria"/>
</dbReference>
<dbReference type="HOGENOM" id="CLU_035188_0_0_11"/>
<dbReference type="PhylomeDB" id="Q1AWB1"/>
<dbReference type="Proteomes" id="UP000006637">
    <property type="component" value="Chromosome"/>
</dbReference>
<dbReference type="GO" id="GO:0005737">
    <property type="term" value="C:cytoplasm"/>
    <property type="evidence" value="ECO:0007669"/>
    <property type="project" value="UniProtKB-SubCell"/>
</dbReference>
<dbReference type="GO" id="GO:0005524">
    <property type="term" value="F:ATP binding"/>
    <property type="evidence" value="ECO:0007669"/>
    <property type="project" value="UniProtKB-KW"/>
</dbReference>
<dbReference type="GO" id="GO:0005506">
    <property type="term" value="F:iron ion binding"/>
    <property type="evidence" value="ECO:0007669"/>
    <property type="project" value="InterPro"/>
</dbReference>
<dbReference type="GO" id="GO:0051536">
    <property type="term" value="F:iron-sulfur cluster binding"/>
    <property type="evidence" value="ECO:0007669"/>
    <property type="project" value="InterPro"/>
</dbReference>
<dbReference type="GO" id="GO:0000049">
    <property type="term" value="F:tRNA binding"/>
    <property type="evidence" value="ECO:0007669"/>
    <property type="project" value="UniProtKB-KW"/>
</dbReference>
<dbReference type="GO" id="GO:0103016">
    <property type="term" value="F:tRNA-uridine 2-sulfurtransferase activity"/>
    <property type="evidence" value="ECO:0007669"/>
    <property type="project" value="UniProtKB-EC"/>
</dbReference>
<dbReference type="GO" id="GO:0016226">
    <property type="term" value="P:iron-sulfur cluster assembly"/>
    <property type="evidence" value="ECO:0007669"/>
    <property type="project" value="InterPro"/>
</dbReference>
<dbReference type="GO" id="GO:0002143">
    <property type="term" value="P:tRNA wobble position uridine thiolation"/>
    <property type="evidence" value="ECO:0007669"/>
    <property type="project" value="TreeGrafter"/>
</dbReference>
<dbReference type="CDD" id="cd06664">
    <property type="entry name" value="IscU_like"/>
    <property type="match status" value="1"/>
</dbReference>
<dbReference type="CDD" id="cd01998">
    <property type="entry name" value="MnmA_TRMU-like"/>
    <property type="match status" value="1"/>
</dbReference>
<dbReference type="Gene3D" id="3.90.1010.10">
    <property type="match status" value="1"/>
</dbReference>
<dbReference type="Gene3D" id="2.30.30.280">
    <property type="entry name" value="Adenine nucleotide alpha hydrolases-like domains"/>
    <property type="match status" value="1"/>
</dbReference>
<dbReference type="Gene3D" id="3.40.50.620">
    <property type="entry name" value="HUPs"/>
    <property type="match status" value="1"/>
</dbReference>
<dbReference type="Gene3D" id="2.40.30.10">
    <property type="entry name" value="Translation factors"/>
    <property type="match status" value="1"/>
</dbReference>
<dbReference type="HAMAP" id="MF_00144">
    <property type="entry name" value="tRNA_thiouridyl_MnmA"/>
    <property type="match status" value="1"/>
</dbReference>
<dbReference type="InterPro" id="IPR004506">
    <property type="entry name" value="MnmA-like"/>
</dbReference>
<dbReference type="InterPro" id="IPR046885">
    <property type="entry name" value="MnmA-like_C"/>
</dbReference>
<dbReference type="InterPro" id="IPR046884">
    <property type="entry name" value="MnmA-like_central"/>
</dbReference>
<dbReference type="InterPro" id="IPR023382">
    <property type="entry name" value="MnmA-like_central_sf"/>
</dbReference>
<dbReference type="InterPro" id="IPR002871">
    <property type="entry name" value="NIF_FeS_clus_asmbl_NifU_N"/>
</dbReference>
<dbReference type="InterPro" id="IPR014729">
    <property type="entry name" value="Rossmann-like_a/b/a_fold"/>
</dbReference>
<dbReference type="NCBIfam" id="NF001138">
    <property type="entry name" value="PRK00143.1"/>
    <property type="match status" value="1"/>
</dbReference>
<dbReference type="NCBIfam" id="TIGR00420">
    <property type="entry name" value="trmU"/>
    <property type="match status" value="1"/>
</dbReference>
<dbReference type="PANTHER" id="PTHR11933:SF5">
    <property type="entry name" value="MITOCHONDRIAL TRNA-SPECIFIC 2-THIOURIDYLASE 1"/>
    <property type="match status" value="1"/>
</dbReference>
<dbReference type="PANTHER" id="PTHR11933">
    <property type="entry name" value="TRNA 5-METHYLAMINOMETHYL-2-THIOURIDYLATE -METHYLTRANSFERASE"/>
    <property type="match status" value="1"/>
</dbReference>
<dbReference type="Pfam" id="PF01592">
    <property type="entry name" value="NifU_N"/>
    <property type="match status" value="1"/>
</dbReference>
<dbReference type="Pfam" id="PF03054">
    <property type="entry name" value="tRNA_Me_trans"/>
    <property type="match status" value="1"/>
</dbReference>
<dbReference type="Pfam" id="PF20258">
    <property type="entry name" value="tRNA_Me_trans_C"/>
    <property type="match status" value="1"/>
</dbReference>
<dbReference type="Pfam" id="PF20259">
    <property type="entry name" value="tRNA_Me_trans_M"/>
    <property type="match status" value="1"/>
</dbReference>
<dbReference type="SUPFAM" id="SSF52402">
    <property type="entry name" value="Adenine nucleotide alpha hydrolases-like"/>
    <property type="match status" value="1"/>
</dbReference>
<dbReference type="SUPFAM" id="SSF82649">
    <property type="entry name" value="SufE/NifU"/>
    <property type="match status" value="1"/>
</dbReference>
<comment type="function">
    <text evidence="2">May be involved in the formation or repair of [Fe-S] clusters present in iron-sulfur proteins.</text>
</comment>
<comment type="function">
    <text evidence="1">Catalyzes the 2-thiolation of uridine at the wobble position (U34) of tRNA, leading to the formation of s(2)U34.</text>
</comment>
<comment type="catalytic activity">
    <reaction>
        <text>S-sulfanyl-L-cysteinyl-[protein] + uridine(34) in tRNA + AH2 + ATP = 2-thiouridine(34) in tRNA + L-cysteinyl-[protein] + A + AMP + diphosphate + H(+)</text>
        <dbReference type="Rhea" id="RHEA:47032"/>
        <dbReference type="Rhea" id="RHEA-COMP:10131"/>
        <dbReference type="Rhea" id="RHEA-COMP:11726"/>
        <dbReference type="Rhea" id="RHEA-COMP:11727"/>
        <dbReference type="Rhea" id="RHEA-COMP:11728"/>
        <dbReference type="ChEBI" id="CHEBI:13193"/>
        <dbReference type="ChEBI" id="CHEBI:15378"/>
        <dbReference type="ChEBI" id="CHEBI:17499"/>
        <dbReference type="ChEBI" id="CHEBI:29950"/>
        <dbReference type="ChEBI" id="CHEBI:30616"/>
        <dbReference type="ChEBI" id="CHEBI:33019"/>
        <dbReference type="ChEBI" id="CHEBI:61963"/>
        <dbReference type="ChEBI" id="CHEBI:65315"/>
        <dbReference type="ChEBI" id="CHEBI:87170"/>
        <dbReference type="ChEBI" id="CHEBI:456215"/>
        <dbReference type="EC" id="2.8.1.13"/>
    </reaction>
</comment>
<comment type="subcellular location">
    <subcellularLocation>
        <location evidence="1">Cytoplasm</location>
    </subcellularLocation>
</comment>
<comment type="similarity">
    <text evidence="2">In the N-terminal section; belongs to the NifU family.</text>
</comment>
<comment type="similarity">
    <text evidence="2">In the C-terminal section; belongs to the MnmA/TRMU family.</text>
</comment>
<accession>Q1AWB1</accession>
<reference key="1">
    <citation type="submission" date="2006-06" db="EMBL/GenBank/DDBJ databases">
        <title>Complete sequence of Rubrobacter xylanophilus DSM 9941.</title>
        <authorList>
            <consortium name="US DOE Joint Genome Institute"/>
            <person name="Copeland A."/>
            <person name="Lucas S."/>
            <person name="Lapidus A."/>
            <person name="Barry K."/>
            <person name="Detter J.C."/>
            <person name="Glavina del Rio T."/>
            <person name="Hammon N."/>
            <person name="Israni S."/>
            <person name="Dalin E."/>
            <person name="Tice H."/>
            <person name="Pitluck S."/>
            <person name="Munk A.C."/>
            <person name="Brettin T."/>
            <person name="Bruce D."/>
            <person name="Han C."/>
            <person name="Tapia R."/>
            <person name="Gilna P."/>
            <person name="Schmutz J."/>
            <person name="Larimer F."/>
            <person name="Land M."/>
            <person name="Hauser L."/>
            <person name="Kyrpides N."/>
            <person name="Lykidis A."/>
            <person name="da Costa M.S."/>
            <person name="Rainey F.A."/>
            <person name="Empadinhas N."/>
            <person name="Jolivet E."/>
            <person name="Battista J.R."/>
            <person name="Richardson P."/>
        </authorList>
    </citation>
    <scope>NUCLEOTIDE SEQUENCE [LARGE SCALE GENOMIC DNA]</scope>
    <source>
        <strain>DSM 9941 / JCM 11954 / NBRC 16129 / PRD-1</strain>
    </source>
</reference>
<gene>
    <name type="primary">nifU/mnmA</name>
    <name type="ordered locus">Rxyl_1354</name>
</gene>
<protein>
    <recommendedName>
        <fullName>Bifunctional protein NifU/MnmA</fullName>
    </recommendedName>
    <domain>
        <recommendedName>
            <fullName>NifU-like protein</fullName>
        </recommendedName>
    </domain>
    <domain>
        <recommendedName>
            <fullName>tRNA-specific 2-thiouridylase MnmA</fullName>
            <ecNumber>2.8.1.13</ecNumber>
        </recommendedName>
    </domain>
</protein>
<evidence type="ECO:0000250" key="1"/>
<evidence type="ECO:0000305" key="2"/>
<feature type="chain" id="PRO_0000349872" description="Bifunctional protein NifU/MnmA">
    <location>
        <begin position="1"/>
        <end position="488"/>
    </location>
</feature>
<feature type="region of interest" description="NifU-like protein">
    <location>
        <begin position="1"/>
        <end position="130"/>
    </location>
</feature>
<feature type="region of interest" description="tRNA-specific 2-thiouridylase MnmA">
    <location>
        <begin position="143"/>
        <end position="488"/>
    </location>
</feature>
<feature type="region of interest" description="Interaction with tRNA" evidence="1">
    <location>
        <begin position="283"/>
        <end position="285"/>
    </location>
</feature>
<feature type="region of interest" description="Interaction with tRNA" evidence="1">
    <location>
        <begin position="433"/>
        <end position="434"/>
    </location>
</feature>
<feature type="active site" description="Nucleophile" evidence="1">
    <location>
        <position position="240"/>
    </location>
</feature>
<feature type="active site" description="Cysteine persulfide intermediate" evidence="1">
    <location>
        <position position="333"/>
    </location>
</feature>
<feature type="binding site" evidence="1">
    <location>
        <begin position="149"/>
        <end position="156"/>
    </location>
    <ligand>
        <name>ATP</name>
        <dbReference type="ChEBI" id="CHEBI:30616"/>
    </ligand>
</feature>
<feature type="binding site" evidence="1">
    <location>
        <position position="175"/>
    </location>
    <ligand>
        <name>ATP</name>
        <dbReference type="ChEBI" id="CHEBI:30616"/>
    </ligand>
</feature>
<feature type="binding site" evidence="1">
    <location>
        <position position="264"/>
    </location>
    <ligand>
        <name>ATP</name>
        <dbReference type="ChEBI" id="CHEBI:30616"/>
    </ligand>
</feature>
<feature type="site" description="Interaction with tRNA" evidence="1">
    <location>
        <position position="265"/>
    </location>
</feature>
<feature type="site" description="Interaction with tRNA" evidence="1">
    <location>
        <position position="465"/>
    </location>
</feature>
<feature type="disulfide bond" description="Alternate" evidence="1">
    <location>
        <begin position="240"/>
        <end position="333"/>
    </location>
</feature>
<organism>
    <name type="scientific">Rubrobacter xylanophilus (strain DSM 9941 / JCM 11954 / NBRC 16129 / PRD-1)</name>
    <dbReference type="NCBI Taxonomy" id="266117"/>
    <lineage>
        <taxon>Bacteria</taxon>
        <taxon>Bacillati</taxon>
        <taxon>Actinomycetota</taxon>
        <taxon>Rubrobacteria</taxon>
        <taxon>Rubrobacterales</taxon>
        <taxon>Rubrobacteraceae</taxon>
        <taxon>Rubrobacter</taxon>
    </lineage>
</organism>